<sequence length="686" mass="75567">MDPKLEERARELRTLLQKASIAYYVHDAPILEDSVYDRLYRELQELERAYPELVTPDSPTQRVGEKPAEHFPTVFHRIPLYSLENAFNPEELEEWQERLLRVLGRAPVPDSRTEGELEYVCELKIDGAALALTYIEGLLERGATRGDGQAGEDITPNVRAIRSIPLRLATADPPPVLEVRGEVYLALAEFERINQERRSAGDPPFANPRNCAAGTLRQLDSRVVAARKLSFFAYALHWPEGWPAGDPPQTQWQCLQQLKELGFPVNPLSQVCRGLGEVIQFYERWRGAQLPYASDGVVVKLNSLRLQEEAGFTQKFPRWAIALKYPAQEVPTRIRAIVASVGRTGAVTPVAELEPVPLAGTLVSRASLHNADRLRELDVHIGDTAIVRKAGEIIPEVVGILKELRPADAVPYSLPSQCPECHTPLVRPPGEAVTRCPNPECPAKLRGQLQHWASRDALDIEGLGEKRAAQLVESLGVRTVADLYRLTPEQLQGLEGMGSRSSQKLVQAIQRSRQQPWERVLYGLGIPHVGVVTAQILAGHFPTPELLAQASAETIAQIYGIGAEVAEAVVAWFAEPAHRRLLQELQALGIPALPQQENPAVSQILAGKKFVITGTLPTLSRQQAKAWIESRGGKVTASVSRQTDYVVVGSDPGSKLEQAQQLGIPLLTEAELLALDPTVESGDLHP</sequence>
<comment type="function">
    <text evidence="1">DNA ligase that catalyzes the formation of phosphodiester linkages between 5'-phosphoryl and 3'-hydroxyl groups in double-stranded DNA using NAD as a coenzyme and as the energy source for the reaction. It is essential for DNA replication and repair of damaged DNA.</text>
</comment>
<comment type="catalytic activity">
    <reaction evidence="1">
        <text>NAD(+) + (deoxyribonucleotide)n-3'-hydroxyl + 5'-phospho-(deoxyribonucleotide)m = (deoxyribonucleotide)n+m + AMP + beta-nicotinamide D-nucleotide.</text>
        <dbReference type="EC" id="6.5.1.2"/>
    </reaction>
</comment>
<comment type="cofactor">
    <cofactor evidence="1">
        <name>Mg(2+)</name>
        <dbReference type="ChEBI" id="CHEBI:18420"/>
    </cofactor>
    <cofactor evidence="1">
        <name>Mn(2+)</name>
        <dbReference type="ChEBI" id="CHEBI:29035"/>
    </cofactor>
</comment>
<comment type="similarity">
    <text evidence="1">Belongs to the NAD-dependent DNA ligase family. LigA subfamily.</text>
</comment>
<reference key="1">
    <citation type="journal article" date="2007" name="ISME J.">
        <title>Population level functional diversity in a microbial community revealed by comparative genomic and metagenomic analyses.</title>
        <authorList>
            <person name="Bhaya D."/>
            <person name="Grossman A.R."/>
            <person name="Steunou A.-S."/>
            <person name="Khuri N."/>
            <person name="Cohan F.M."/>
            <person name="Hamamura N."/>
            <person name="Melendrez M.C."/>
            <person name="Bateson M.M."/>
            <person name="Ward D.M."/>
            <person name="Heidelberg J.F."/>
        </authorList>
    </citation>
    <scope>NUCLEOTIDE SEQUENCE [LARGE SCALE GENOMIC DNA]</scope>
    <source>
        <strain>JA-2-3B'a(2-13)</strain>
    </source>
</reference>
<keyword id="KW-0227">DNA damage</keyword>
<keyword id="KW-0234">DNA repair</keyword>
<keyword id="KW-0235">DNA replication</keyword>
<keyword id="KW-0436">Ligase</keyword>
<keyword id="KW-0460">Magnesium</keyword>
<keyword id="KW-0464">Manganese</keyword>
<keyword id="KW-0479">Metal-binding</keyword>
<keyword id="KW-0520">NAD</keyword>
<keyword id="KW-1185">Reference proteome</keyword>
<keyword id="KW-0862">Zinc</keyword>
<name>DNLJ_SYNJB</name>
<dbReference type="EC" id="6.5.1.2" evidence="1"/>
<dbReference type="EMBL" id="CP000240">
    <property type="protein sequence ID" value="ABD02308.1"/>
    <property type="molecule type" value="Genomic_DNA"/>
</dbReference>
<dbReference type="RefSeq" id="WP_011432958.1">
    <property type="nucleotide sequence ID" value="NC_007776.1"/>
</dbReference>
<dbReference type="SMR" id="Q2JLU3"/>
<dbReference type="STRING" id="321332.CYB_1335"/>
<dbReference type="KEGG" id="cyb:CYB_1335"/>
<dbReference type="eggNOG" id="COG0272">
    <property type="taxonomic scope" value="Bacteria"/>
</dbReference>
<dbReference type="HOGENOM" id="CLU_007764_2_1_3"/>
<dbReference type="OrthoDB" id="9759736at2"/>
<dbReference type="Proteomes" id="UP000001938">
    <property type="component" value="Chromosome"/>
</dbReference>
<dbReference type="GO" id="GO:0005829">
    <property type="term" value="C:cytosol"/>
    <property type="evidence" value="ECO:0007669"/>
    <property type="project" value="TreeGrafter"/>
</dbReference>
<dbReference type="GO" id="GO:0003677">
    <property type="term" value="F:DNA binding"/>
    <property type="evidence" value="ECO:0007669"/>
    <property type="project" value="InterPro"/>
</dbReference>
<dbReference type="GO" id="GO:0003911">
    <property type="term" value="F:DNA ligase (NAD+) activity"/>
    <property type="evidence" value="ECO:0007669"/>
    <property type="project" value="UniProtKB-UniRule"/>
</dbReference>
<dbReference type="GO" id="GO:0046872">
    <property type="term" value="F:metal ion binding"/>
    <property type="evidence" value="ECO:0007669"/>
    <property type="project" value="UniProtKB-KW"/>
</dbReference>
<dbReference type="GO" id="GO:0006281">
    <property type="term" value="P:DNA repair"/>
    <property type="evidence" value="ECO:0007669"/>
    <property type="project" value="UniProtKB-KW"/>
</dbReference>
<dbReference type="GO" id="GO:0006260">
    <property type="term" value="P:DNA replication"/>
    <property type="evidence" value="ECO:0007669"/>
    <property type="project" value="UniProtKB-KW"/>
</dbReference>
<dbReference type="CDD" id="cd17748">
    <property type="entry name" value="BRCT_DNA_ligase_like"/>
    <property type="match status" value="1"/>
</dbReference>
<dbReference type="CDD" id="cd00114">
    <property type="entry name" value="LIGANc"/>
    <property type="match status" value="1"/>
</dbReference>
<dbReference type="FunFam" id="1.10.150.20:FF:000006">
    <property type="entry name" value="DNA ligase"/>
    <property type="match status" value="1"/>
</dbReference>
<dbReference type="FunFam" id="1.10.150.20:FF:000007">
    <property type="entry name" value="DNA ligase"/>
    <property type="match status" value="1"/>
</dbReference>
<dbReference type="FunFam" id="2.40.50.140:FF:000012">
    <property type="entry name" value="DNA ligase"/>
    <property type="match status" value="1"/>
</dbReference>
<dbReference type="FunFam" id="3.30.470.30:FF:000001">
    <property type="entry name" value="DNA ligase"/>
    <property type="match status" value="1"/>
</dbReference>
<dbReference type="Gene3D" id="6.20.10.30">
    <property type="match status" value="1"/>
</dbReference>
<dbReference type="Gene3D" id="1.10.150.20">
    <property type="entry name" value="5' to 3' exonuclease, C-terminal subdomain"/>
    <property type="match status" value="2"/>
</dbReference>
<dbReference type="Gene3D" id="3.40.50.10190">
    <property type="entry name" value="BRCT domain"/>
    <property type="match status" value="1"/>
</dbReference>
<dbReference type="Gene3D" id="3.30.470.30">
    <property type="entry name" value="DNA ligase/mRNA capping enzyme"/>
    <property type="match status" value="1"/>
</dbReference>
<dbReference type="Gene3D" id="1.10.287.610">
    <property type="entry name" value="Helix hairpin bin"/>
    <property type="match status" value="1"/>
</dbReference>
<dbReference type="Gene3D" id="2.40.50.140">
    <property type="entry name" value="Nucleic acid-binding proteins"/>
    <property type="match status" value="1"/>
</dbReference>
<dbReference type="HAMAP" id="MF_01588">
    <property type="entry name" value="DNA_ligase_A"/>
    <property type="match status" value="1"/>
</dbReference>
<dbReference type="InterPro" id="IPR001357">
    <property type="entry name" value="BRCT_dom"/>
</dbReference>
<dbReference type="InterPro" id="IPR036420">
    <property type="entry name" value="BRCT_dom_sf"/>
</dbReference>
<dbReference type="InterPro" id="IPR041663">
    <property type="entry name" value="DisA/LigA_HHH"/>
</dbReference>
<dbReference type="InterPro" id="IPR001679">
    <property type="entry name" value="DNA_ligase"/>
</dbReference>
<dbReference type="InterPro" id="IPR018239">
    <property type="entry name" value="DNA_ligase_AS"/>
</dbReference>
<dbReference type="InterPro" id="IPR033136">
    <property type="entry name" value="DNA_ligase_CS"/>
</dbReference>
<dbReference type="InterPro" id="IPR013839">
    <property type="entry name" value="DNAligase_adenylation"/>
</dbReference>
<dbReference type="InterPro" id="IPR013840">
    <property type="entry name" value="DNAligase_N"/>
</dbReference>
<dbReference type="InterPro" id="IPR003583">
    <property type="entry name" value="Hlx-hairpin-Hlx_DNA-bd_motif"/>
</dbReference>
<dbReference type="InterPro" id="IPR012340">
    <property type="entry name" value="NA-bd_OB-fold"/>
</dbReference>
<dbReference type="InterPro" id="IPR004150">
    <property type="entry name" value="NAD_DNA_ligase_OB"/>
</dbReference>
<dbReference type="InterPro" id="IPR010994">
    <property type="entry name" value="RuvA_2-like"/>
</dbReference>
<dbReference type="InterPro" id="IPR004149">
    <property type="entry name" value="Znf_DNAligase_C4"/>
</dbReference>
<dbReference type="NCBIfam" id="TIGR00575">
    <property type="entry name" value="dnlj"/>
    <property type="match status" value="1"/>
</dbReference>
<dbReference type="NCBIfam" id="NF005932">
    <property type="entry name" value="PRK07956.1"/>
    <property type="match status" value="1"/>
</dbReference>
<dbReference type="PANTHER" id="PTHR23389">
    <property type="entry name" value="CHROMOSOME TRANSMISSION FIDELITY FACTOR 18"/>
    <property type="match status" value="1"/>
</dbReference>
<dbReference type="PANTHER" id="PTHR23389:SF9">
    <property type="entry name" value="DNA LIGASE"/>
    <property type="match status" value="1"/>
</dbReference>
<dbReference type="Pfam" id="PF00533">
    <property type="entry name" value="BRCT"/>
    <property type="match status" value="1"/>
</dbReference>
<dbReference type="Pfam" id="PF01653">
    <property type="entry name" value="DNA_ligase_aden"/>
    <property type="match status" value="1"/>
</dbReference>
<dbReference type="Pfam" id="PF03120">
    <property type="entry name" value="DNA_ligase_OB"/>
    <property type="match status" value="1"/>
</dbReference>
<dbReference type="Pfam" id="PF03119">
    <property type="entry name" value="DNA_ligase_ZBD"/>
    <property type="match status" value="1"/>
</dbReference>
<dbReference type="Pfam" id="PF12826">
    <property type="entry name" value="HHH_2"/>
    <property type="match status" value="1"/>
</dbReference>
<dbReference type="Pfam" id="PF14520">
    <property type="entry name" value="HHH_5"/>
    <property type="match status" value="1"/>
</dbReference>
<dbReference type="Pfam" id="PF22745">
    <property type="entry name" value="Nlig-Ia"/>
    <property type="match status" value="1"/>
</dbReference>
<dbReference type="PIRSF" id="PIRSF001604">
    <property type="entry name" value="LigA"/>
    <property type="match status" value="1"/>
</dbReference>
<dbReference type="SMART" id="SM00292">
    <property type="entry name" value="BRCT"/>
    <property type="match status" value="1"/>
</dbReference>
<dbReference type="SMART" id="SM00278">
    <property type="entry name" value="HhH1"/>
    <property type="match status" value="3"/>
</dbReference>
<dbReference type="SMART" id="SM00532">
    <property type="entry name" value="LIGANc"/>
    <property type="match status" value="1"/>
</dbReference>
<dbReference type="SUPFAM" id="SSF52113">
    <property type="entry name" value="BRCT domain"/>
    <property type="match status" value="1"/>
</dbReference>
<dbReference type="SUPFAM" id="SSF56091">
    <property type="entry name" value="DNA ligase/mRNA capping enzyme, catalytic domain"/>
    <property type="match status" value="1"/>
</dbReference>
<dbReference type="SUPFAM" id="SSF50249">
    <property type="entry name" value="Nucleic acid-binding proteins"/>
    <property type="match status" value="1"/>
</dbReference>
<dbReference type="SUPFAM" id="SSF47781">
    <property type="entry name" value="RuvA domain 2-like"/>
    <property type="match status" value="1"/>
</dbReference>
<dbReference type="PROSITE" id="PS50172">
    <property type="entry name" value="BRCT"/>
    <property type="match status" value="1"/>
</dbReference>
<dbReference type="PROSITE" id="PS01055">
    <property type="entry name" value="DNA_LIGASE_N1"/>
    <property type="match status" value="1"/>
</dbReference>
<dbReference type="PROSITE" id="PS01056">
    <property type="entry name" value="DNA_LIGASE_N2"/>
    <property type="match status" value="1"/>
</dbReference>
<gene>
    <name evidence="1" type="primary">ligA</name>
    <name type="ordered locus">CYB_1335</name>
</gene>
<protein>
    <recommendedName>
        <fullName evidence="1">DNA ligase</fullName>
        <ecNumber evidence="1">6.5.1.2</ecNumber>
    </recommendedName>
    <alternativeName>
        <fullName evidence="1">Polydeoxyribonucleotide synthase [NAD(+)]</fullName>
    </alternativeName>
</protein>
<organism>
    <name type="scientific">Synechococcus sp. (strain JA-2-3B'a(2-13))</name>
    <name type="common">Cyanobacteria bacterium Yellowstone B-Prime</name>
    <dbReference type="NCBI Taxonomy" id="321332"/>
    <lineage>
        <taxon>Bacteria</taxon>
        <taxon>Bacillati</taxon>
        <taxon>Cyanobacteriota</taxon>
        <taxon>Cyanophyceae</taxon>
        <taxon>Synechococcales</taxon>
        <taxon>Synechococcaceae</taxon>
        <taxon>Synechococcus</taxon>
    </lineage>
</organism>
<accession>Q2JLU3</accession>
<proteinExistence type="inferred from homology"/>
<feature type="chain" id="PRO_0000313482" description="DNA ligase">
    <location>
        <begin position="1"/>
        <end position="686"/>
    </location>
</feature>
<feature type="domain" description="BRCT" evidence="1">
    <location>
        <begin position="600"/>
        <end position="686"/>
    </location>
</feature>
<feature type="active site" description="N6-AMP-lysine intermediate" evidence="1">
    <location>
        <position position="124"/>
    </location>
</feature>
<feature type="binding site" evidence="1">
    <location>
        <begin position="33"/>
        <end position="37"/>
    </location>
    <ligand>
        <name>NAD(+)</name>
        <dbReference type="ChEBI" id="CHEBI:57540"/>
    </ligand>
</feature>
<feature type="binding site" evidence="1">
    <location>
        <begin position="82"/>
        <end position="83"/>
    </location>
    <ligand>
        <name>NAD(+)</name>
        <dbReference type="ChEBI" id="CHEBI:57540"/>
    </ligand>
</feature>
<feature type="binding site" evidence="1">
    <location>
        <position position="122"/>
    </location>
    <ligand>
        <name>NAD(+)</name>
        <dbReference type="ChEBI" id="CHEBI:57540"/>
    </ligand>
</feature>
<feature type="binding site" evidence="1">
    <location>
        <position position="145"/>
    </location>
    <ligand>
        <name>NAD(+)</name>
        <dbReference type="ChEBI" id="CHEBI:57540"/>
    </ligand>
</feature>
<feature type="binding site" evidence="1">
    <location>
        <position position="182"/>
    </location>
    <ligand>
        <name>NAD(+)</name>
        <dbReference type="ChEBI" id="CHEBI:57540"/>
    </ligand>
</feature>
<feature type="binding site" evidence="1">
    <location>
        <position position="300"/>
    </location>
    <ligand>
        <name>NAD(+)</name>
        <dbReference type="ChEBI" id="CHEBI:57540"/>
    </ligand>
</feature>
<feature type="binding site" evidence="1">
    <location>
        <position position="324"/>
    </location>
    <ligand>
        <name>NAD(+)</name>
        <dbReference type="ChEBI" id="CHEBI:57540"/>
    </ligand>
</feature>
<feature type="binding site" evidence="1">
    <location>
        <position position="418"/>
    </location>
    <ligand>
        <name>Zn(2+)</name>
        <dbReference type="ChEBI" id="CHEBI:29105"/>
    </ligand>
</feature>
<feature type="binding site" evidence="1">
    <location>
        <position position="421"/>
    </location>
    <ligand>
        <name>Zn(2+)</name>
        <dbReference type="ChEBI" id="CHEBI:29105"/>
    </ligand>
</feature>
<feature type="binding site" evidence="1">
    <location>
        <position position="436"/>
    </location>
    <ligand>
        <name>Zn(2+)</name>
        <dbReference type="ChEBI" id="CHEBI:29105"/>
    </ligand>
</feature>
<feature type="binding site" evidence="1">
    <location>
        <position position="441"/>
    </location>
    <ligand>
        <name>Zn(2+)</name>
        <dbReference type="ChEBI" id="CHEBI:29105"/>
    </ligand>
</feature>
<evidence type="ECO:0000255" key="1">
    <source>
        <dbReference type="HAMAP-Rule" id="MF_01588"/>
    </source>
</evidence>